<evidence type="ECO:0000250" key="1"/>
<evidence type="ECO:0000250" key="2">
    <source>
        <dbReference type="UniProtKB" id="Q8IZT6"/>
    </source>
</evidence>
<evidence type="ECO:0000255" key="3"/>
<evidence type="ECO:0000255" key="4">
    <source>
        <dbReference type="PROSITE-ProRule" id="PRU00044"/>
    </source>
</evidence>
<evidence type="ECO:0000255" key="5">
    <source>
        <dbReference type="PROSITE-ProRule" id="PRU00116"/>
    </source>
</evidence>
<evidence type="ECO:0000256" key="6">
    <source>
        <dbReference type="SAM" id="MobiDB-lite"/>
    </source>
</evidence>
<dbReference type="EMBL" id="AY489022">
    <property type="protein sequence ID" value="AAR84355.1"/>
    <property type="molecule type" value="Genomic_DNA"/>
</dbReference>
<dbReference type="EMBL" id="AY488995">
    <property type="protein sequence ID" value="AAR84355.1"/>
    <property type="status" value="JOINED"/>
    <property type="molecule type" value="Genomic_DNA"/>
</dbReference>
<dbReference type="EMBL" id="AY488996">
    <property type="protein sequence ID" value="AAR84355.1"/>
    <property type="status" value="JOINED"/>
    <property type="molecule type" value="Genomic_DNA"/>
</dbReference>
<dbReference type="EMBL" id="AY488997">
    <property type="protein sequence ID" value="AAR84355.1"/>
    <property type="status" value="JOINED"/>
    <property type="molecule type" value="Genomic_DNA"/>
</dbReference>
<dbReference type="EMBL" id="AY488998">
    <property type="protein sequence ID" value="AAR84355.1"/>
    <property type="status" value="JOINED"/>
    <property type="molecule type" value="Genomic_DNA"/>
</dbReference>
<dbReference type="EMBL" id="AY488999">
    <property type="protein sequence ID" value="AAR84355.1"/>
    <property type="status" value="JOINED"/>
    <property type="molecule type" value="Genomic_DNA"/>
</dbReference>
<dbReference type="EMBL" id="AY489000">
    <property type="protein sequence ID" value="AAR84355.1"/>
    <property type="status" value="JOINED"/>
    <property type="molecule type" value="Genomic_DNA"/>
</dbReference>
<dbReference type="EMBL" id="AY489001">
    <property type="protein sequence ID" value="AAR84355.1"/>
    <property type="status" value="JOINED"/>
    <property type="molecule type" value="Genomic_DNA"/>
</dbReference>
<dbReference type="EMBL" id="AY489002">
    <property type="protein sequence ID" value="AAR84355.1"/>
    <property type="status" value="JOINED"/>
    <property type="molecule type" value="Genomic_DNA"/>
</dbReference>
<dbReference type="EMBL" id="AY489003">
    <property type="protein sequence ID" value="AAR84355.1"/>
    <property type="status" value="JOINED"/>
    <property type="molecule type" value="Genomic_DNA"/>
</dbReference>
<dbReference type="EMBL" id="AY489004">
    <property type="protein sequence ID" value="AAR84355.1"/>
    <property type="status" value="JOINED"/>
    <property type="molecule type" value="Genomic_DNA"/>
</dbReference>
<dbReference type="EMBL" id="AY489005">
    <property type="protein sequence ID" value="AAR84355.1"/>
    <property type="status" value="JOINED"/>
    <property type="molecule type" value="Genomic_DNA"/>
</dbReference>
<dbReference type="EMBL" id="AY489006">
    <property type="protein sequence ID" value="AAR84355.1"/>
    <property type="status" value="JOINED"/>
    <property type="molecule type" value="Genomic_DNA"/>
</dbReference>
<dbReference type="EMBL" id="AY489007">
    <property type="protein sequence ID" value="AAR84355.1"/>
    <property type="status" value="JOINED"/>
    <property type="molecule type" value="Genomic_DNA"/>
</dbReference>
<dbReference type="EMBL" id="AY489008">
    <property type="protein sequence ID" value="AAR84355.1"/>
    <property type="status" value="JOINED"/>
    <property type="molecule type" value="Genomic_DNA"/>
</dbReference>
<dbReference type="EMBL" id="AY489009">
    <property type="protein sequence ID" value="AAR84355.1"/>
    <property type="status" value="JOINED"/>
    <property type="molecule type" value="Genomic_DNA"/>
</dbReference>
<dbReference type="EMBL" id="AY489010">
    <property type="protein sequence ID" value="AAR84355.1"/>
    <property type="status" value="JOINED"/>
    <property type="molecule type" value="Genomic_DNA"/>
</dbReference>
<dbReference type="EMBL" id="AY489011">
    <property type="protein sequence ID" value="AAR84355.1"/>
    <property type="status" value="JOINED"/>
    <property type="molecule type" value="Genomic_DNA"/>
</dbReference>
<dbReference type="EMBL" id="AY489012">
    <property type="protein sequence ID" value="AAR84355.1"/>
    <property type="status" value="JOINED"/>
    <property type="molecule type" value="Genomic_DNA"/>
</dbReference>
<dbReference type="EMBL" id="AY489013">
    <property type="protein sequence ID" value="AAR84355.1"/>
    <property type="status" value="JOINED"/>
    <property type="molecule type" value="Genomic_DNA"/>
</dbReference>
<dbReference type="EMBL" id="AY489014">
    <property type="protein sequence ID" value="AAR84355.1"/>
    <property type="status" value="JOINED"/>
    <property type="molecule type" value="Genomic_DNA"/>
</dbReference>
<dbReference type="EMBL" id="AY489015">
    <property type="protein sequence ID" value="AAR84355.1"/>
    <property type="status" value="JOINED"/>
    <property type="molecule type" value="Genomic_DNA"/>
</dbReference>
<dbReference type="EMBL" id="AY489016">
    <property type="protein sequence ID" value="AAR84355.1"/>
    <property type="status" value="JOINED"/>
    <property type="molecule type" value="Genomic_DNA"/>
</dbReference>
<dbReference type="EMBL" id="AY489017">
    <property type="protein sequence ID" value="AAR84355.1"/>
    <property type="status" value="JOINED"/>
    <property type="molecule type" value="Genomic_DNA"/>
</dbReference>
<dbReference type="EMBL" id="AY489018">
    <property type="protein sequence ID" value="AAR84355.1"/>
    <property type="status" value="JOINED"/>
    <property type="molecule type" value="Genomic_DNA"/>
</dbReference>
<dbReference type="EMBL" id="AY489019">
    <property type="protein sequence ID" value="AAR84355.1"/>
    <property type="status" value="JOINED"/>
    <property type="molecule type" value="Genomic_DNA"/>
</dbReference>
<dbReference type="EMBL" id="AY489020">
    <property type="protein sequence ID" value="AAR84355.1"/>
    <property type="status" value="JOINED"/>
    <property type="molecule type" value="Genomic_DNA"/>
</dbReference>
<dbReference type="EMBL" id="AY489021">
    <property type="protein sequence ID" value="AAR84355.1"/>
    <property type="status" value="JOINED"/>
    <property type="molecule type" value="Genomic_DNA"/>
</dbReference>
<dbReference type="SMR" id="P62287"/>
<dbReference type="GO" id="GO:0005737">
    <property type="term" value="C:cytoplasm"/>
    <property type="evidence" value="ECO:0007669"/>
    <property type="project" value="UniProtKB-SubCell"/>
</dbReference>
<dbReference type="GO" id="GO:0005634">
    <property type="term" value="C:nucleus"/>
    <property type="evidence" value="ECO:0007669"/>
    <property type="project" value="UniProtKB-SubCell"/>
</dbReference>
<dbReference type="GO" id="GO:0000922">
    <property type="term" value="C:spindle pole"/>
    <property type="evidence" value="ECO:0007669"/>
    <property type="project" value="TreeGrafter"/>
</dbReference>
<dbReference type="GO" id="GO:0005516">
    <property type="term" value="F:calmodulin binding"/>
    <property type="evidence" value="ECO:0007669"/>
    <property type="project" value="UniProtKB-KW"/>
</dbReference>
<dbReference type="GO" id="GO:0051301">
    <property type="term" value="P:cell division"/>
    <property type="evidence" value="ECO:0007669"/>
    <property type="project" value="UniProtKB-KW"/>
</dbReference>
<dbReference type="GO" id="GO:0051295">
    <property type="term" value="P:establishment of meiotic spindle localization"/>
    <property type="evidence" value="ECO:0007669"/>
    <property type="project" value="TreeGrafter"/>
</dbReference>
<dbReference type="GO" id="GO:0000278">
    <property type="term" value="P:mitotic cell cycle"/>
    <property type="evidence" value="ECO:0007669"/>
    <property type="project" value="TreeGrafter"/>
</dbReference>
<dbReference type="GO" id="GO:0007051">
    <property type="term" value="P:spindle organization"/>
    <property type="evidence" value="ECO:0007669"/>
    <property type="project" value="TreeGrafter"/>
</dbReference>
<dbReference type="CDD" id="cd21223">
    <property type="entry name" value="CH_ASPM_rpt1"/>
    <property type="match status" value="1"/>
</dbReference>
<dbReference type="CDD" id="cd21224">
    <property type="entry name" value="CH_ASPM_rpt2"/>
    <property type="match status" value="1"/>
</dbReference>
<dbReference type="FunFam" id="1.20.5.190:FF:000052">
    <property type="entry name" value="Abnormal spindle-like microcephaly-associated protein"/>
    <property type="match status" value="1"/>
</dbReference>
<dbReference type="FunFam" id="1.10.418.10:FF:000051">
    <property type="entry name" value="Abnormal spindle-like microcephaly-associated protein homolog"/>
    <property type="match status" value="1"/>
</dbReference>
<dbReference type="FunFam" id="1.20.5.190:FF:000008">
    <property type="entry name" value="Abnormal spindle-like microcephaly-associated protein homolog"/>
    <property type="match status" value="5"/>
</dbReference>
<dbReference type="FunFam" id="1.20.5.190:FF:000009">
    <property type="entry name" value="Abnormal spindle-like microcephaly-associated protein homolog"/>
    <property type="match status" value="4"/>
</dbReference>
<dbReference type="FunFam" id="1.20.5.190:FF:000010">
    <property type="entry name" value="Abnormal spindle-like microcephaly-associated protein homolog"/>
    <property type="match status" value="2"/>
</dbReference>
<dbReference type="FunFam" id="1.20.5.190:FF:000016">
    <property type="entry name" value="Abnormal spindle-like microcephaly-associated protein homolog"/>
    <property type="match status" value="1"/>
</dbReference>
<dbReference type="FunFam" id="1.20.5.190:FF:000023">
    <property type="entry name" value="Abnormal spindle-like microcephaly-associated protein homolog"/>
    <property type="match status" value="1"/>
</dbReference>
<dbReference type="FunFam" id="1.20.5.190:FF:000028">
    <property type="entry name" value="Abnormal spindle-like microcephaly-associated protein homolog"/>
    <property type="match status" value="1"/>
</dbReference>
<dbReference type="FunFam" id="1.20.5.190:FF:000029">
    <property type="entry name" value="Abnormal spindle-like microcephaly-associated protein homolog"/>
    <property type="match status" value="1"/>
</dbReference>
<dbReference type="FunFam" id="1.20.5.190:FF:000030">
    <property type="entry name" value="Abnormal spindle-like microcephaly-associated protein homolog"/>
    <property type="match status" value="1"/>
</dbReference>
<dbReference type="FunFam" id="1.20.5.190:FF:000031">
    <property type="entry name" value="Abnormal spindle-like microcephaly-associated protein homolog"/>
    <property type="match status" value="1"/>
</dbReference>
<dbReference type="FunFam" id="1.20.5.190:FF:000032">
    <property type="entry name" value="Abnormal spindle-like microcephaly-associated protein homolog"/>
    <property type="match status" value="1"/>
</dbReference>
<dbReference type="FunFam" id="1.20.5.190:FF:000034">
    <property type="entry name" value="Abnormal spindle-like microcephaly-associated protein homolog"/>
    <property type="match status" value="1"/>
</dbReference>
<dbReference type="FunFam" id="1.20.5.190:FF:000035">
    <property type="entry name" value="Abnormal spindle-like microcephaly-associated protein homolog"/>
    <property type="match status" value="1"/>
</dbReference>
<dbReference type="FunFam" id="1.20.5.190:FF:000046">
    <property type="entry name" value="Abnormal spindle-like microcephaly-associated protein homolog"/>
    <property type="match status" value="1"/>
</dbReference>
<dbReference type="FunFam" id="1.20.5.190:FF:000053">
    <property type="entry name" value="Abnormal spindle-like microcephaly-associated protein homolog"/>
    <property type="match status" value="1"/>
</dbReference>
<dbReference type="FunFam" id="1.20.5.190:FF:000059">
    <property type="entry name" value="Abnormal spindle-like microcephaly-associated protein homolog"/>
    <property type="match status" value="1"/>
</dbReference>
<dbReference type="FunFam" id="2.60.40.10:FF:001429">
    <property type="entry name" value="Abnormal spindle-like microcephaly-associated protein homolog"/>
    <property type="match status" value="1"/>
</dbReference>
<dbReference type="Gene3D" id="1.20.5.190">
    <property type="match status" value="35"/>
</dbReference>
<dbReference type="Gene3D" id="1.10.418.10">
    <property type="entry name" value="Calponin-like domain"/>
    <property type="match status" value="2"/>
</dbReference>
<dbReference type="Gene3D" id="2.60.40.10">
    <property type="entry name" value="Immunoglobulins"/>
    <property type="match status" value="1"/>
</dbReference>
<dbReference type="Gene3D" id="1.25.10.10">
    <property type="entry name" value="Leucine-rich Repeat Variant"/>
    <property type="match status" value="1"/>
</dbReference>
<dbReference type="InterPro" id="IPR011989">
    <property type="entry name" value="ARM-like"/>
</dbReference>
<dbReference type="InterPro" id="IPR016024">
    <property type="entry name" value="ARM-type_fold"/>
</dbReference>
<dbReference type="InterPro" id="IPR031549">
    <property type="entry name" value="ASH"/>
</dbReference>
<dbReference type="InterPro" id="IPR051185">
    <property type="entry name" value="ASPM"/>
</dbReference>
<dbReference type="InterPro" id="IPR001715">
    <property type="entry name" value="CH_dom"/>
</dbReference>
<dbReference type="InterPro" id="IPR036872">
    <property type="entry name" value="CH_dom_sf"/>
</dbReference>
<dbReference type="InterPro" id="IPR013783">
    <property type="entry name" value="Ig-like_fold"/>
</dbReference>
<dbReference type="InterPro" id="IPR000048">
    <property type="entry name" value="IQ_motif_EF-hand-BS"/>
</dbReference>
<dbReference type="InterPro" id="IPR027417">
    <property type="entry name" value="P-loop_NTPase"/>
</dbReference>
<dbReference type="PANTHER" id="PTHR22706">
    <property type="entry name" value="ASSEMBLY FACTOR FOR SPINDLE MICROTUBULES"/>
    <property type="match status" value="1"/>
</dbReference>
<dbReference type="PANTHER" id="PTHR22706:SF1">
    <property type="entry name" value="ASSEMBLY FACTOR FOR SPINDLE MICROTUBULES"/>
    <property type="match status" value="1"/>
</dbReference>
<dbReference type="Pfam" id="PF15780">
    <property type="entry name" value="ASH"/>
    <property type="match status" value="1"/>
</dbReference>
<dbReference type="Pfam" id="PF00307">
    <property type="entry name" value="CH"/>
    <property type="match status" value="1"/>
</dbReference>
<dbReference type="Pfam" id="PF00612">
    <property type="entry name" value="IQ"/>
    <property type="match status" value="39"/>
</dbReference>
<dbReference type="SMART" id="SM00033">
    <property type="entry name" value="CH"/>
    <property type="match status" value="2"/>
</dbReference>
<dbReference type="SMART" id="SM00015">
    <property type="entry name" value="IQ"/>
    <property type="match status" value="66"/>
</dbReference>
<dbReference type="SUPFAM" id="SSF48371">
    <property type="entry name" value="ARM repeat"/>
    <property type="match status" value="1"/>
</dbReference>
<dbReference type="SUPFAM" id="SSF47576">
    <property type="entry name" value="Calponin-homology domain, CH-domain"/>
    <property type="match status" value="1"/>
</dbReference>
<dbReference type="SUPFAM" id="SSF52540">
    <property type="entry name" value="P-loop containing nucleoside triphosphate hydrolases"/>
    <property type="match status" value="17"/>
</dbReference>
<dbReference type="PROSITE" id="PS50021">
    <property type="entry name" value="CH"/>
    <property type="match status" value="2"/>
</dbReference>
<dbReference type="PROSITE" id="PS50096">
    <property type="entry name" value="IQ"/>
    <property type="match status" value="39"/>
</dbReference>
<accession>P62287</accession>
<protein>
    <recommendedName>
        <fullName>Abnormal spindle-like microcephaly-associated protein homolog</fullName>
    </recommendedName>
</protein>
<gene>
    <name type="primary">ASPM</name>
</gene>
<name>ASPM_COLGU</name>
<sequence length="3477" mass="409686">MANRRVGRGCWEVSPTERRPPAGLRGPATEEEASSPPVLSLSHFCRSPFLCFGDVLLGDSRTVPLALDNPNEEVAEVKISHFPAADLGFSVSQRCFVLQPKDKIVISVDWTPFKEGRVREIMTFLINDVLKHQAILLGNAEKQKKKKRSLWDTIKKKKISASTSHNRRVSNIQNVNKTFSVSQKVNRVRSPLQACENLAVNEGGLPTENNSLTLEENKIPVSPISPAFNECHGATCLPLSVRRSTTYSSLHASENRELLNVDNTNVSKVSFNEKAVAETTFNSMNVSGQSGENSKLILTPNYSSTLNVTQSQINFLSPDSFVNNSHGANNELELVTCLSSDMFMTDNSKPVHLQSTTAHEIYQKILSPDSFIKDNYGLNQDLESESVNLILSPNQFLKDNMAYMCTSQQTCKVPLTNENSQVPQSPQDWSKSEVSPCIPECQGSKSPKAIFEELVEMKSDYYSFIKQNNPKFSAVQDISSHSHNKQPKRRPILSATVTKRKPTCTRENQTEINKPKAKRCLNSAVGGHEKVINNQKEKEDFHSYLPVIDPVLSKSKSYKNQIMPSSTTASVARKRKSDESMEDANVRVAVTEHTEVREIKRIHFSPSESKTSAVKKTKNVITPISKCISNREKLNLKKKTDLLIFKTPISKTNRRTKPIIAVAQSNLTFIKPLKTDIPRHPMPFAAKNMFYDERWKEKQEQGFTWWLNFILTPDDFTVKTNISEVNAATLLLGVENQHKISVPRAPTKEEMSLRAYTARCRLNRLRRAACRLFTSEKMVKAIKKLEIEIEARRLIVRKDRHLWKDVGERQKVLNWLLSYNPLWLRIGLETIYGELISLEDNSDVTGLAMFILNRLLWNPDIAAEYRHPTVPHLYRDGHEGALSKFTLKKLLLLVCFLDYAKISKLIDHDPCLFCKDAEFKASKEILLAFSRDFLSGEGDLSRHLGLLGLPVNHVQTPFDEFDFAITNLAVDLQCGVRLVRTMELLTQNWSLSKKLRIPAISRLQKMHNVDIVLQVLKSRGIELSDEHGNTILSKDIVDRHREKTLRLLWKIAFAFQVDISLNLDQLKEEIAFLKHTQSIKRTISLLSCHSDALINKKKGKRDSGSFEQYSENIKLLMDWVNAVCAFYNKKVENFTVSFSDGRVLCYLIHHYHPCYVPFDAICQRTTQTVECTQTGSVVLNSSSESDDSSLDMSLKAFDHENTSELYKELLENEKKNFHLVRSAVRDLGGIPAMINHSDMSNTIPDEKVVITYLSFLCARLLDLRKEIRAARLIQTTWRKYKLKTDLKRHQERDKAARIIQSAVINFLAKQRLRKRVNAALIIQKYWRRVLAQRKLLILKKEKLEKVQNKAASLIQGYWRRYSTRKRFLKLKYYSIILQSRIRMIIAVTSYKRYLWATVTIQRHWRAYLRRKQDQQRYEMLKSSSLIIQSMFRKWKQRKMQSQVKATVILQRAFREWHLRKRAKEENSAIVIQSWYRMHKELRKYIYIRSCVIVIQKRFRCFQAQKLYKRKKESILTIQKYYKAYLKGKIERTNYLQKRAAAIQLQAAFRRLKAHNLCRQIRAACVIQSYWRMRQDRVRFLNLKKTIIKFQAHIRKHQQLQKYKKMKKAAVIIQTHFRAYIFARKVLASYQKTRSAVIVLQSAYRGMQARKMYIHILTSVIKIQSYYRAYVSKKEFLSLKNATIKLQSIVKMKQTRKQYLHLRAAALFIQQCYRSKKIATQKREEYMQMRESCIKLQAFVRGYLVRKQMRLQRKAVISLQSYFRMRKARQYYLKMYKAIIVIQNYYHAYKAQVNQRKKFLRVKKAATCLQAAYRGYKIRQLIKQQSIAAVKIQSAFRGYNKRVKYQSVLQSIIKIQRWYRAYKTLHDTRTHFLKTKAAVVSLQSAYRGWKVRKQIRREHQAALKIQSAFRMAKAQKQFRLFKTAALVIQQNFRAWTAGRKQRMEYIELRHAVLILQSMWKGKTLRRQLQRQHKCAIIIQSYYRMHVQQKKWKIMKKAALLIQKYYKAYSIGREQHHLYLKTKAAVVTLQSAYRGMKVRKRIKDCNKAAVTIQSKYRAYKTKKKYATYRASAIIIQRWYRGIKITHRQHKEYLNLKKTAIKIQSVYRGIRVRRHIQHMHRAATYIKAMFKMHQSRISYHTMRKAAIVIQVRFRAYYQGKMQREKYLTILKAVKILQASFRGVRVRWTLRKMQIAATLIQSNYRRYKQQTYFNKLKKITKTIQQRYRAVKERNIQFQRYNKLRHSVIYIQAIFRGKKARRHLKMMHVAATLIQRRFRTLMMRRRFLSLKKTAVWIQRKYRAHLCTKHHLQFLQVQNAVIKIQSSYRRWMIRKKMREMHRAATFIQATFRMQRVHMRYQALKQASVVIQQQYQANRAAKLQRQHYLRQRHSAVILQAAFRGMKTRRHLKSMHSSATLIQSRFRSLLVRRRFISLKKATIFVQRKYRATICAKHKLHQFLQLRKAAITVQSSYRRLMVKKKLQEMQRAAVLIQATFRMHRTYVTFQTWKQASILIQQHYRTYRAAKLQKENYIRQWHSAVVIQAAYKGMKARQHLREKHKAAIIIQSTYRMHRQYCFYQKLQWATKIIQEKYRANKKKQKALQHNELKKETCVQASFQDMNMQKQIQEQHQAAIIIQKHCKAFKIRKHYLHLRATVVSIQRRYRKLTVVRTQAVICIQSYYRGFKVRRDIQNMHRAATLIQSFYRMHRAKVDYQTKKTAIVVIQNYYRLYIRVKTERKIFLAVQKSVRTIQAAFRGMKVRQKLKNISEEKMAAIVNQSALCCYRSKTQYEAVQSEGVTIQEWYKASGLACSQEAEYHSQSRAAVTIQKAFRRMVTRKVETQKCAALRIQFFLQMAVYRRRFVQQKRAAITLQHYFRTWQTRKQFLLYRKAAVVLQNHYRAFLSAKHQRQVYLQIRSSVIIIQARSKGFIQKRKFQEIKNSTIKIQAMWRRYRAKKYLCKVKAACKIQAWYRCWRAHKEYLAILKAVKIIQGGFYTKLERTWFLNVRASAIIIQRKWRAILSAKIAHEHFLMIKRHRAACLIQAHYRGYKERQVFLRQKSAALIIQKYIRAREAGKRERIKYIEFKKSTVILQALVRGWLVRKRILEQRTKIRLLHFTAAAYYHLNALRIQRAYKLYLAVKNANKQVNSVICIQRWFRARLQQKKFIQKYYSIEKIEHEGQECLSQRNRAASVIQKAVRHFVLRKKQEKFTSGIIKIQALWRGYSWRKKNDCTKIKAIRLSLQVVNREIREENKLYKRTALALHYLLTYKHLSAILEALKHLEVVTRLSPLCCENMAQSGAISKIFVLIRSCNRSVPCMEVIRYAVQVLLNVSKYEKTTSAVYDVENCVDTLLELLQIYREKPGNKVADKGGSIFTKTCCLLAILLKTTNRASDVRSRSKVVDRIYSLYKLTAHKHKMNTERILHKQKKNSSISIPFIPETPVRTRIVSRLKPDWVLRRDNMEEITNPLQAIQMVMDTLGIPY</sequence>
<reference key="1">
    <citation type="journal article" date="2004" name="Hum. Mol. Genet.">
        <title>Adaptive evolution of ASPM, a major determinant of cerebral cortical size in humans.</title>
        <authorList>
            <person name="Evans P.D."/>
            <person name="Anderson J.R."/>
            <person name="Vallender E.J."/>
            <person name="Gilbert S.L."/>
            <person name="Malcom C.M."/>
            <person name="Dorus S."/>
            <person name="Lahn B.T."/>
        </authorList>
    </citation>
    <scope>NUCLEOTIDE SEQUENCE [GENOMIC DNA]</scope>
</reference>
<organism>
    <name type="scientific">Colobus guereza</name>
    <name type="common">Mantled guereza</name>
    <name type="synonym">Eastern black-and-white colobus monkey</name>
    <dbReference type="NCBI Taxonomy" id="33548"/>
    <lineage>
        <taxon>Eukaryota</taxon>
        <taxon>Metazoa</taxon>
        <taxon>Chordata</taxon>
        <taxon>Craniata</taxon>
        <taxon>Vertebrata</taxon>
        <taxon>Euteleostomi</taxon>
        <taxon>Mammalia</taxon>
        <taxon>Eutheria</taxon>
        <taxon>Euarchontoglires</taxon>
        <taxon>Primates</taxon>
        <taxon>Haplorrhini</taxon>
        <taxon>Catarrhini</taxon>
        <taxon>Cercopithecidae</taxon>
        <taxon>Colobinae</taxon>
        <taxon>Colobus</taxon>
    </lineage>
</organism>
<feature type="chain" id="PRO_0000191329" description="Abnormal spindle-like microcephaly-associated protein homolog">
    <location>
        <begin position="1"/>
        <end position="3477"/>
    </location>
</feature>
<feature type="domain" description="Calponin-homology (CH) 1" evidence="4">
    <location>
        <begin position="920"/>
        <end position="1056"/>
    </location>
</feature>
<feature type="domain" description="Calponin-homology (CH) 2" evidence="4">
    <location>
        <begin position="1110"/>
        <end position="1261"/>
    </location>
</feature>
<feature type="domain" description="IQ 1" evidence="5">
    <location>
        <begin position="1347"/>
        <end position="1378"/>
    </location>
</feature>
<feature type="domain" description="IQ 2" evidence="5">
    <location>
        <begin position="1393"/>
        <end position="1422"/>
    </location>
</feature>
<feature type="domain" description="IQ 3" evidence="5">
    <location>
        <begin position="1582"/>
        <end position="1613"/>
    </location>
</feature>
<feature type="domain" description="IQ 4" evidence="5">
    <location>
        <begin position="1605"/>
        <end position="1634"/>
    </location>
</feature>
<feature type="domain" description="IQ 5" evidence="5">
    <location>
        <begin position="1632"/>
        <end position="1661"/>
    </location>
</feature>
<feature type="domain" description="IQ 6" evidence="5">
    <location>
        <begin position="1655"/>
        <end position="1684"/>
    </location>
</feature>
<feature type="domain" description="IQ 7" evidence="5">
    <location>
        <begin position="1728"/>
        <end position="1757"/>
    </location>
</feature>
<feature type="domain" description="IQ 8" evidence="5">
    <location>
        <begin position="1751"/>
        <end position="1782"/>
    </location>
</feature>
<feature type="domain" description="IQ 9" evidence="5">
    <location>
        <begin position="1801"/>
        <end position="1830"/>
    </location>
</feature>
<feature type="domain" description="IQ 10" evidence="5">
    <location>
        <begin position="1824"/>
        <end position="1853"/>
    </location>
</feature>
<feature type="domain" description="IQ 11" evidence="5">
    <location>
        <begin position="1874"/>
        <end position="1903"/>
    </location>
</feature>
<feature type="domain" description="IQ 12" evidence="5">
    <location>
        <begin position="1897"/>
        <end position="1928"/>
    </location>
</feature>
<feature type="domain" description="IQ 13" evidence="5">
    <location>
        <begin position="1947"/>
        <end position="1978"/>
    </location>
</feature>
<feature type="domain" description="IQ 14" evidence="5">
    <location>
        <begin position="1970"/>
        <end position="2001"/>
    </location>
</feature>
<feature type="domain" description="IQ 15" evidence="5">
    <location>
        <begin position="2020"/>
        <end position="2049"/>
    </location>
</feature>
<feature type="domain" description="IQ 16" evidence="5">
    <location>
        <begin position="2043"/>
        <end position="2074"/>
    </location>
</feature>
<feature type="domain" description="IQ 17" evidence="5">
    <location>
        <begin position="2093"/>
        <end position="2124"/>
    </location>
</feature>
<feature type="domain" description="IQ 18" evidence="5">
    <location>
        <begin position="2116"/>
        <end position="2147"/>
    </location>
</feature>
<feature type="domain" description="IQ 19" evidence="5">
    <location>
        <begin position="2239"/>
        <end position="2270"/>
    </location>
</feature>
<feature type="domain" description="IQ 20" evidence="5">
    <location>
        <begin position="2262"/>
        <end position="2293"/>
    </location>
</feature>
<feature type="domain" description="IQ 21" evidence="5">
    <location>
        <begin position="2311"/>
        <end position="2342"/>
    </location>
</feature>
<feature type="domain" description="IQ 22" evidence="5">
    <location>
        <begin position="2334"/>
        <end position="2365"/>
    </location>
</feature>
<feature type="domain" description="IQ 23" evidence="5">
    <location>
        <begin position="2384"/>
        <end position="2415"/>
    </location>
</feature>
<feature type="domain" description="IQ 24" evidence="5">
    <location>
        <begin position="2407"/>
        <end position="2438"/>
    </location>
</feature>
<feature type="domain" description="IQ 25" evidence="5">
    <location>
        <begin position="2457"/>
        <end position="2488"/>
    </location>
</feature>
<feature type="domain" description="IQ 26" evidence="5">
    <location>
        <begin position="2480"/>
        <end position="2511"/>
    </location>
</feature>
<feature type="domain" description="IQ 27" evidence="5">
    <location>
        <begin position="2530"/>
        <end position="2561"/>
    </location>
</feature>
<feature type="domain" description="IQ 28" evidence="5">
    <location>
        <begin position="2624"/>
        <end position="2653"/>
    </location>
</feature>
<feature type="domain" description="IQ 29" evidence="5">
    <location>
        <begin position="2665"/>
        <end position="2696"/>
    </location>
</feature>
<feature type="domain" description="IQ 30" evidence="5">
    <location>
        <begin position="2688"/>
        <end position="2719"/>
    </location>
</feature>
<feature type="domain" description="IQ 31" evidence="5">
    <location>
        <begin position="2738"/>
        <end position="2767"/>
    </location>
</feature>
<feature type="domain" description="IQ 32" evidence="5">
    <location>
        <begin position="2814"/>
        <end position="2845"/>
    </location>
</feature>
<feature type="domain" description="IQ 33" evidence="5">
    <location>
        <begin position="2859"/>
        <end position="2890"/>
    </location>
</feature>
<feature type="domain" description="IQ 34" evidence="5">
    <location>
        <begin position="2909"/>
        <end position="2938"/>
    </location>
</feature>
<feature type="domain" description="IQ 35" evidence="5">
    <location>
        <begin position="2932"/>
        <end position="2963"/>
    </location>
</feature>
<feature type="domain" description="IQ 36" evidence="5">
    <location>
        <begin position="2954"/>
        <end position="2985"/>
    </location>
</feature>
<feature type="domain" description="IQ 37" evidence="5">
    <location>
        <begin position="3029"/>
        <end position="3060"/>
    </location>
</feature>
<feature type="domain" description="IQ 38" evidence="5">
    <location>
        <begin position="3079"/>
        <end position="3110"/>
    </location>
</feature>
<feature type="domain" description="IQ 39" evidence="5">
    <location>
        <begin position="3204"/>
        <end position="3235"/>
    </location>
</feature>
<feature type="region of interest" description="Disordered" evidence="6">
    <location>
        <begin position="1"/>
        <end position="34"/>
    </location>
</feature>
<feature type="region of interest" description="Disordered" evidence="6">
    <location>
        <begin position="417"/>
        <end position="436"/>
    </location>
</feature>
<feature type="region of interest" description="Disordered" evidence="6">
    <location>
        <begin position="563"/>
        <end position="583"/>
    </location>
</feature>
<feature type="coiled-coil region" evidence="3">
    <location>
        <begin position="1057"/>
        <end position="1076"/>
    </location>
</feature>
<feature type="compositionally biased region" description="Polar residues" evidence="6">
    <location>
        <begin position="417"/>
        <end position="433"/>
    </location>
</feature>
<feature type="modified residue" description="Phosphoserine" evidence="2">
    <location>
        <position position="283"/>
    </location>
</feature>
<feature type="modified residue" description="Phosphoserine" evidence="2">
    <location>
        <position position="367"/>
    </location>
</feature>
<feature type="modified residue" description="Phosphoserine" evidence="2">
    <location>
        <position position="392"/>
    </location>
</feature>
<feature type="modified residue" description="Phosphoserine" evidence="2">
    <location>
        <position position="425"/>
    </location>
</feature>
<feature type="modified residue" description="Phosphoserine" evidence="2">
    <location>
        <position position="605"/>
    </location>
</feature>
<feature type="modified residue" description="Phosphoserine" evidence="2">
    <location>
        <position position="1103"/>
    </location>
</feature>
<proteinExistence type="inferred from homology"/>
<keyword id="KW-0112">Calmodulin-binding</keyword>
<keyword id="KW-0131">Cell cycle</keyword>
<keyword id="KW-0132">Cell division</keyword>
<keyword id="KW-0175">Coiled coil</keyword>
<keyword id="KW-0963">Cytoplasm</keyword>
<keyword id="KW-0206">Cytoskeleton</keyword>
<keyword id="KW-0498">Mitosis</keyword>
<keyword id="KW-0539">Nucleus</keyword>
<keyword id="KW-0597">Phosphoprotein</keyword>
<keyword id="KW-0677">Repeat</keyword>
<comment type="function">
    <text evidence="1">Probable role in mitotic spindle regulation and coordination of mitotic processes. May have a preferential role in regulating neurogenesis (By similarity).</text>
</comment>
<comment type="subcellular location">
    <subcellularLocation>
        <location evidence="1">Cytoplasm</location>
    </subcellularLocation>
    <subcellularLocation>
        <location evidence="1">Cytoplasm</location>
        <location evidence="1">Cytoskeleton</location>
        <location evidence="1">Spindle</location>
    </subcellularLocation>
    <subcellularLocation>
        <location evidence="1">Nucleus</location>
    </subcellularLocation>
    <text evidence="1">The nuclear-cytoplasmic distribution could be regulated by the availability of calmodulin. Localizes to spindle poles during mitosis (By similarity).</text>
</comment>